<comment type="similarity">
    <text evidence="2">Belongs to the asfivirus MGF 110 family.</text>
</comment>
<reference key="1">
    <citation type="journal article" date="1990" name="Virology">
        <title>Genetic variation and multigene families in African swine fever virus.</title>
        <authorList>
            <person name="de la Vega I."/>
            <person name="Vinuela E."/>
            <person name="Blasco R."/>
        </authorList>
    </citation>
    <scope>NUCLEOTIDE SEQUENCE [GENOMIC DNA]</scope>
</reference>
<proteinExistence type="inferred from homology"/>
<name>11013_ASFL5</name>
<accession>P26702</accession>
<feature type="signal peptide" evidence="1">
    <location>
        <begin position="1"/>
        <end position="16"/>
    </location>
</feature>
<feature type="chain" id="PRO_0000036727" description="Protein MGF 110-13L">
    <location>
        <begin position="17"/>
        <end position="117"/>
    </location>
</feature>
<organismHost>
    <name type="scientific">Ornithodoros</name>
    <name type="common">relapsing fever ticks</name>
    <dbReference type="NCBI Taxonomy" id="6937"/>
</organismHost>
<organismHost>
    <name type="scientific">Sus scrofa</name>
    <name type="common">Pig</name>
    <dbReference type="NCBI Taxonomy" id="9823"/>
</organismHost>
<organism>
    <name type="scientific">African swine fever virus (isolate Portugal/Lis 57/1957)</name>
    <name type="common">ASFV</name>
    <dbReference type="NCBI Taxonomy" id="10499"/>
    <lineage>
        <taxon>Viruses</taxon>
        <taxon>Varidnaviria</taxon>
        <taxon>Bamfordvirae</taxon>
        <taxon>Nucleocytoviricota</taxon>
        <taxon>Pokkesviricetes</taxon>
        <taxon>Asfuvirales</taxon>
        <taxon>Asfarviridae</taxon>
        <taxon>Asfivirus</taxon>
        <taxon>African swine fever virus</taxon>
    </lineage>
</organism>
<sequence>MKLFVLLSILVWLAQPVLNRPLSIFYTKQILPRTYTPPMRELEYWCTYGKHCDFCWDCKNGICKNKVLDDMPLIVQNDYISKCSITRFIDRCMYFIEPKIPYIHYMNCSLPHIFSLI</sequence>
<keyword id="KW-0244">Early protein</keyword>
<keyword id="KW-0732">Signal</keyword>
<evidence type="ECO:0000255" key="1"/>
<evidence type="ECO:0000305" key="2"/>
<protein>
    <recommendedName>
        <fullName>Protein MGF 110-13L</fullName>
    </recommendedName>
</protein>
<dbReference type="EMBL" id="M58155">
    <property type="protein sequence ID" value="AAA42710.1"/>
    <property type="molecule type" value="Genomic_DNA"/>
</dbReference>
<dbReference type="PIR" id="D45348">
    <property type="entry name" value="D45348"/>
</dbReference>
<dbReference type="InterPro" id="IPR004848">
    <property type="entry name" value="ASFV_fam_110"/>
</dbReference>
<dbReference type="Pfam" id="PF01639">
    <property type="entry name" value="v110"/>
    <property type="match status" value="1"/>
</dbReference>
<gene>
    <name type="ORF">LIS117</name>
</gene>